<gene>
    <name type="primary">FMT1</name>
    <name type="ordered locus">YBL013W</name>
    <name type="ORF">YBL0311</name>
    <name type="ORF">YBL0313</name>
</gene>
<feature type="transit peptide" description="Mitochondrion" evidence="2">
    <location>
        <begin position="1"/>
        <end position="26"/>
    </location>
</feature>
<feature type="chain" id="PRO_0000010096" description="Methionyl-tRNA formyltransferase, mitochondrial">
    <location>
        <begin position="27"/>
        <end position="401"/>
    </location>
</feature>
<feature type="binding site" evidence="1">
    <location>
        <begin position="18"/>
        <end position="20"/>
    </location>
    <ligand>
        <name>(6R)-10-formyltetrahydrofolate</name>
        <dbReference type="ChEBI" id="CHEBI:195366"/>
    </ligand>
</feature>
<feature type="binding site" evidence="1">
    <location>
        <begin position="66"/>
        <end position="70"/>
    </location>
    <ligand>
        <name>(6R)-10-formyltetrahydrofolate</name>
        <dbReference type="ChEBI" id="CHEBI:195366"/>
    </ligand>
</feature>
<dbReference type="EC" id="2.1.2.9" evidence="4"/>
<dbReference type="EMBL" id="AY490279">
    <property type="protein sequence ID" value="AAR86694.1"/>
    <property type="molecule type" value="Genomic_DNA"/>
</dbReference>
<dbReference type="EMBL" id="AY492339">
    <property type="protein sequence ID" value="AAR86695.1"/>
    <property type="molecule type" value="Genomic_DNA"/>
</dbReference>
<dbReference type="EMBL" id="Z35774">
    <property type="protein sequence ID" value="CAA84832.1"/>
    <property type="status" value="ALT_FRAME"/>
    <property type="molecule type" value="Genomic_DNA"/>
</dbReference>
<dbReference type="EMBL" id="BK006936">
    <property type="protein sequence ID" value="DAA07107.1"/>
    <property type="molecule type" value="Genomic_DNA"/>
</dbReference>
<dbReference type="PIR" id="S25331">
    <property type="entry name" value="S25331"/>
</dbReference>
<dbReference type="RefSeq" id="NP_009540.2">
    <property type="nucleotide sequence ID" value="NM_001178253.1"/>
</dbReference>
<dbReference type="SMR" id="P32785"/>
<dbReference type="BioGRID" id="32687">
    <property type="interactions" value="179"/>
</dbReference>
<dbReference type="DIP" id="DIP-8221N"/>
<dbReference type="FunCoup" id="P32785">
    <property type="interactions" value="359"/>
</dbReference>
<dbReference type="IntAct" id="P32785">
    <property type="interactions" value="4"/>
</dbReference>
<dbReference type="STRING" id="4932.YBL013W"/>
<dbReference type="iPTMnet" id="P32785"/>
<dbReference type="PaxDb" id="4932-YBL013W"/>
<dbReference type="PeptideAtlas" id="P32785"/>
<dbReference type="EnsemblFungi" id="YBL013W_mRNA">
    <property type="protein sequence ID" value="YBL013W"/>
    <property type="gene ID" value="YBL013W"/>
</dbReference>
<dbReference type="GeneID" id="852270"/>
<dbReference type="KEGG" id="sce:YBL013W"/>
<dbReference type="AGR" id="SGD:S000000109"/>
<dbReference type="SGD" id="S000000109">
    <property type="gene designation" value="FMT1"/>
</dbReference>
<dbReference type="VEuPathDB" id="FungiDB:YBL013W"/>
<dbReference type="eggNOG" id="KOG3082">
    <property type="taxonomic scope" value="Eukaryota"/>
</dbReference>
<dbReference type="GeneTree" id="ENSGT00390000017828"/>
<dbReference type="HOGENOM" id="CLU_033347_0_1_1"/>
<dbReference type="InParanoid" id="P32785"/>
<dbReference type="OMA" id="KEWWNGV"/>
<dbReference type="OrthoDB" id="10268103at2759"/>
<dbReference type="BioCyc" id="MetaCyc:G3O-28918-MONOMER"/>
<dbReference type="BioCyc" id="YEAST:G3O-28918-MONOMER"/>
<dbReference type="BRENDA" id="2.1.2.9">
    <property type="organism ID" value="984"/>
</dbReference>
<dbReference type="BioGRID-ORCS" id="852270">
    <property type="hits" value="7 hits in 10 CRISPR screens"/>
</dbReference>
<dbReference type="PRO" id="PR:P32785"/>
<dbReference type="Proteomes" id="UP000002311">
    <property type="component" value="Chromosome II"/>
</dbReference>
<dbReference type="RNAct" id="P32785">
    <property type="molecule type" value="protein"/>
</dbReference>
<dbReference type="GO" id="GO:0005759">
    <property type="term" value="C:mitochondrial matrix"/>
    <property type="evidence" value="ECO:0007669"/>
    <property type="project" value="UniProtKB-SubCell"/>
</dbReference>
<dbReference type="GO" id="GO:0005739">
    <property type="term" value="C:mitochondrion"/>
    <property type="evidence" value="ECO:0000314"/>
    <property type="project" value="SGD"/>
</dbReference>
<dbReference type="GO" id="GO:0004479">
    <property type="term" value="F:methionyl-tRNA formyltransferase activity"/>
    <property type="evidence" value="ECO:0000314"/>
    <property type="project" value="SGD"/>
</dbReference>
<dbReference type="GO" id="GO:0071951">
    <property type="term" value="P:conversion of methionyl-tRNA to N-formyl-methionyl-tRNA"/>
    <property type="evidence" value="ECO:0000314"/>
    <property type="project" value="SGD"/>
</dbReference>
<dbReference type="CDD" id="cd08646">
    <property type="entry name" value="FMT_core_Met-tRNA-FMT_N"/>
    <property type="match status" value="1"/>
</dbReference>
<dbReference type="FunFam" id="3.40.50.12230:FF:000005">
    <property type="entry name" value="Methionyl-tRNA transformylase"/>
    <property type="match status" value="1"/>
</dbReference>
<dbReference type="Gene3D" id="3.40.50.12230">
    <property type="match status" value="1"/>
</dbReference>
<dbReference type="InterPro" id="IPR005794">
    <property type="entry name" value="Fmt"/>
</dbReference>
<dbReference type="InterPro" id="IPR005793">
    <property type="entry name" value="Formyl_trans_C"/>
</dbReference>
<dbReference type="InterPro" id="IPR002376">
    <property type="entry name" value="Formyl_transf_N"/>
</dbReference>
<dbReference type="InterPro" id="IPR036477">
    <property type="entry name" value="Formyl_transf_N_sf"/>
</dbReference>
<dbReference type="InterPro" id="IPR041711">
    <property type="entry name" value="Met-tRNA-FMT_N"/>
</dbReference>
<dbReference type="NCBIfam" id="TIGR00460">
    <property type="entry name" value="fmt"/>
    <property type="match status" value="1"/>
</dbReference>
<dbReference type="PANTHER" id="PTHR11138">
    <property type="entry name" value="METHIONYL-TRNA FORMYLTRANSFERASE"/>
    <property type="match status" value="1"/>
</dbReference>
<dbReference type="PANTHER" id="PTHR11138:SF5">
    <property type="entry name" value="METHIONYL-TRNA FORMYLTRANSFERASE, MITOCHONDRIAL"/>
    <property type="match status" value="1"/>
</dbReference>
<dbReference type="Pfam" id="PF02911">
    <property type="entry name" value="Formyl_trans_C"/>
    <property type="match status" value="1"/>
</dbReference>
<dbReference type="Pfam" id="PF00551">
    <property type="entry name" value="Formyl_trans_N"/>
    <property type="match status" value="1"/>
</dbReference>
<dbReference type="SUPFAM" id="SSF53328">
    <property type="entry name" value="Formyltransferase"/>
    <property type="match status" value="1"/>
</dbReference>
<protein>
    <recommendedName>
        <fullName evidence="9">Methionyl-tRNA formyltransferase, mitochondrial</fullName>
        <shortName evidence="9">MtFMT</shortName>
        <ecNumber evidence="4">2.1.2.9</ecNumber>
    </recommendedName>
</protein>
<sequence>MVKMRRITPTRLLFTCRYISNNASPPVQPLNVLFFGSDTFSNFSLQALNELRQNNGSCGIVDNIQVVTRSPKWCGRQKSILKYPPIFDMAEKLQLPRPITCDTKQEMLALSKLTPSRQGNPENDGSGAPFNAIIAVSFGKLIPGDLIRAVPLALNVHPSLLPRHKGSAPIQRALLEGDTYTGVTIQTLHPDRFDHGAIVAQTEPLAIATMLSKGRVNDSTADFNSEGLPRRTAILMDQLGALGAQLLGQTLRERLYLPQNRVQAPTAYKPSYAHRITTEDKRIHWARDSAAELLNKLETLGPLHAFKEATAARKDAQNSVLKRILFHECKVMRDARLDNGSKPGMFKYDDIKDCILVTCRGNLLLCVSRLQFEGFAVERAGQFMARLRKRCGALSEKLVFL</sequence>
<proteinExistence type="evidence at protein level"/>
<organism>
    <name type="scientific">Saccharomyces cerevisiae (strain ATCC 204508 / S288c)</name>
    <name type="common">Baker's yeast</name>
    <dbReference type="NCBI Taxonomy" id="559292"/>
    <lineage>
        <taxon>Eukaryota</taxon>
        <taxon>Fungi</taxon>
        <taxon>Dikarya</taxon>
        <taxon>Ascomycota</taxon>
        <taxon>Saccharomycotina</taxon>
        <taxon>Saccharomycetes</taxon>
        <taxon>Saccharomycetales</taxon>
        <taxon>Saccharomycetaceae</taxon>
        <taxon>Saccharomyces</taxon>
    </lineage>
</organism>
<accession>P32785</accession>
<accession>D6VPY7</accession>
<accession>Q6RUA6</accession>
<comment type="function">
    <text evidence="3 4 8">Formylates methionyl-tRNA in mitochondria and the cytoplasm (PubMed:10781559, PubMed:30409808). Responsible for the formylation of the 8 N-terminally formylated (Nt-formylated) mitochondrial matrix proteins that are encoded by mitochondrial DNA (PubMed:10781559, PubMed:12549912). Nt-formylated proteins in the cytoplasm are strongly up-regulated in stationary phase or upon starvation for specific amino acids (His or Lys) and are targeted for degradation by a PSH1 E3 ubiquitin ligase-mediated fMet/N-end rule pathway. Increased Nt-formylation of cytosolic proteins appears to be important for adaptation to these stresses. Stationary phase-degraded Nt-formylated proteins include histone H3-like centromeric protein CSE4, Mediator complex subunit 3 (PGD1) and small ribosomal subunit protein uS8-A (RPS22A) (PubMed:30409808).</text>
</comment>
<comment type="catalytic activity">
    <reaction evidence="4">
        <text>L-methionyl-tRNA(fMet) + (6R)-10-formyltetrahydrofolate = N-formyl-L-methionyl-tRNA(fMet) + (6S)-5,6,7,8-tetrahydrofolate + H(+)</text>
        <dbReference type="Rhea" id="RHEA:24380"/>
        <dbReference type="Rhea" id="RHEA-COMP:9952"/>
        <dbReference type="Rhea" id="RHEA-COMP:9953"/>
        <dbReference type="ChEBI" id="CHEBI:15378"/>
        <dbReference type="ChEBI" id="CHEBI:57453"/>
        <dbReference type="ChEBI" id="CHEBI:78530"/>
        <dbReference type="ChEBI" id="CHEBI:78844"/>
        <dbReference type="ChEBI" id="CHEBI:195366"/>
        <dbReference type="EC" id="2.1.2.9"/>
    </reaction>
</comment>
<comment type="biophysicochemical properties">
    <kinetics>
        <KM evidence="4">0.3 uM for L-methionyl-tRNA(fMet)</KM>
        <text evidence="4">kcat is 0.13 sec(-1) with L-methionyl-tRNA(fMet) as substrate.</text>
    </kinetics>
</comment>
<comment type="subcellular location">
    <subcellularLocation>
        <location evidence="5 7 8">Mitochondrion</location>
    </subcellularLocation>
    <subcellularLocation>
        <location evidence="8">Mitochondrion matrix</location>
    </subcellularLocation>
    <subcellularLocation>
        <location evidence="8">Cytoplasm</location>
    </subcellularLocation>
    <text evidence="8">In exponentially growing cells, more than 97% of FMT1 is present in mitochondria. In stationary phase, about 35% of FMT1 becomes localized to the cytosol in a GCN2-dependent manner.</text>
</comment>
<comment type="PTM">
    <text evidence="8">Phosphorylated by GCN2 in response to nutrient deprivation. Phosphorylation mediates retention of FMT1 in the cytoplasm.</text>
</comment>
<comment type="miscellaneous">
    <text evidence="3 4">Formylation of the initiator Met-tRNA is not essential for mitochondrial protein synthesis in S.cerevisiae.</text>
</comment>
<comment type="miscellaneous">
    <text evidence="6">Present with 1070 molecules/cell in log phase SD medium.</text>
</comment>
<comment type="similarity">
    <text evidence="10">Belongs to the Fmt family.</text>
</comment>
<comment type="sequence caution" evidence="10">
    <conflict type="frameshift">
        <sequence resource="EMBL-CDS" id="CAA84832"/>
    </conflict>
</comment>
<name>FMT_YEAST</name>
<evidence type="ECO:0000250" key="1">
    <source>
        <dbReference type="UniProtKB" id="P77398"/>
    </source>
</evidence>
<evidence type="ECO:0000255" key="2"/>
<evidence type="ECO:0000269" key="3">
    <source>
    </source>
</evidence>
<evidence type="ECO:0000269" key="4">
    <source>
    </source>
</evidence>
<evidence type="ECO:0000269" key="5">
    <source>
    </source>
</evidence>
<evidence type="ECO:0000269" key="6">
    <source>
    </source>
</evidence>
<evidence type="ECO:0000269" key="7">
    <source>
    </source>
</evidence>
<evidence type="ECO:0000269" key="8">
    <source>
    </source>
</evidence>
<evidence type="ECO:0000303" key="9">
    <source>
    </source>
</evidence>
<evidence type="ECO:0000305" key="10"/>
<keyword id="KW-0963">Cytoplasm</keyword>
<keyword id="KW-0496">Mitochondrion</keyword>
<keyword id="KW-0648">Protein biosynthesis</keyword>
<keyword id="KW-1185">Reference proteome</keyword>
<keyword id="KW-0808">Transferase</keyword>
<keyword id="KW-0809">Transit peptide</keyword>
<reference key="1">
    <citation type="submission" date="2003-12" db="EMBL/GenBank/DDBJ databases">
        <title>Yeast mitochondrial translation initiation.</title>
        <authorList>
            <person name="Williams E.H."/>
            <person name="Butler C.A."/>
            <person name="Fox T.D."/>
        </authorList>
    </citation>
    <scope>NUCLEOTIDE SEQUENCE [GENOMIC DNA]</scope>
    <source>
        <strain>ATCC 24657 / D273-10B</strain>
        <strain>ATCC 90840 / EAY235 / FY23</strain>
    </source>
</reference>
<reference key="2">
    <citation type="journal article" date="1992" name="Yeast">
        <title>The sequence of an 8 kb segment on the left arm of chromosome II from Saccharomyces cerevisiae identifies five new open reading frames of unknown functions, two tRNA genes and two transposable elements.</title>
        <authorList>
            <person name="Skala J."/>
            <person name="van Dyck L."/>
            <person name="Purnelle B."/>
            <person name="Goffeau A."/>
        </authorList>
    </citation>
    <scope>NUCLEOTIDE SEQUENCE [GENOMIC DNA]</scope>
    <source>
        <strain>ATCC 204508 / S288c</strain>
    </source>
</reference>
<reference key="3">
    <citation type="journal article" date="1994" name="EMBO J.">
        <title>Complete DNA sequence of yeast chromosome II.</title>
        <authorList>
            <person name="Feldmann H."/>
            <person name="Aigle M."/>
            <person name="Aljinovic G."/>
            <person name="Andre B."/>
            <person name="Baclet M.C."/>
            <person name="Barthe C."/>
            <person name="Baur A."/>
            <person name="Becam A.-M."/>
            <person name="Biteau N."/>
            <person name="Boles E."/>
            <person name="Brandt T."/>
            <person name="Brendel M."/>
            <person name="Brueckner M."/>
            <person name="Bussereau F."/>
            <person name="Christiansen C."/>
            <person name="Contreras R."/>
            <person name="Crouzet M."/>
            <person name="Cziepluch C."/>
            <person name="Demolis N."/>
            <person name="Delaveau T."/>
            <person name="Doignon F."/>
            <person name="Domdey H."/>
            <person name="Duesterhus S."/>
            <person name="Dubois E."/>
            <person name="Dujon B."/>
            <person name="El Bakkoury M."/>
            <person name="Entian K.-D."/>
            <person name="Feuermann M."/>
            <person name="Fiers W."/>
            <person name="Fobo G.M."/>
            <person name="Fritz C."/>
            <person name="Gassenhuber J."/>
            <person name="Glansdorff N."/>
            <person name="Goffeau A."/>
            <person name="Grivell L.A."/>
            <person name="de Haan M."/>
            <person name="Hein C."/>
            <person name="Herbert C.J."/>
            <person name="Hollenberg C.P."/>
            <person name="Holmstroem K."/>
            <person name="Jacq C."/>
            <person name="Jacquet M."/>
            <person name="Jauniaux J.-C."/>
            <person name="Jonniaux J.-L."/>
            <person name="Kallesoee T."/>
            <person name="Kiesau P."/>
            <person name="Kirchrath L."/>
            <person name="Koetter P."/>
            <person name="Korol S."/>
            <person name="Liebl S."/>
            <person name="Logghe M."/>
            <person name="Lohan A.J.E."/>
            <person name="Louis E.J."/>
            <person name="Li Z.Y."/>
            <person name="Maat M.J."/>
            <person name="Mallet L."/>
            <person name="Mannhaupt G."/>
            <person name="Messenguy F."/>
            <person name="Miosga T."/>
            <person name="Molemans F."/>
            <person name="Mueller S."/>
            <person name="Nasr F."/>
            <person name="Obermaier B."/>
            <person name="Perea J."/>
            <person name="Pierard A."/>
            <person name="Piravandi E."/>
            <person name="Pohl F.M."/>
            <person name="Pohl T.M."/>
            <person name="Potier S."/>
            <person name="Proft M."/>
            <person name="Purnelle B."/>
            <person name="Ramezani Rad M."/>
            <person name="Rieger M."/>
            <person name="Rose M."/>
            <person name="Schaaff-Gerstenschlaeger I."/>
            <person name="Scherens B."/>
            <person name="Schwarzlose C."/>
            <person name="Skala J."/>
            <person name="Slonimski P.P."/>
            <person name="Smits P.H.M."/>
            <person name="Souciet J.-L."/>
            <person name="Steensma H.Y."/>
            <person name="Stucka R."/>
            <person name="Urrestarazu L.A."/>
            <person name="van der Aart Q.J.M."/>
            <person name="Van Dyck L."/>
            <person name="Vassarotti A."/>
            <person name="Vetter I."/>
            <person name="Vierendeels F."/>
            <person name="Vissers S."/>
            <person name="Wagner G."/>
            <person name="de Wergifosse P."/>
            <person name="Wolfe K.H."/>
            <person name="Zagulski M."/>
            <person name="Zimmermann F.K."/>
            <person name="Mewes H.-W."/>
            <person name="Kleine K."/>
        </authorList>
    </citation>
    <scope>NUCLEOTIDE SEQUENCE [LARGE SCALE GENOMIC DNA]</scope>
    <source>
        <strain>ATCC 204508 / S288c</strain>
    </source>
</reference>
<reference key="4">
    <citation type="journal article" date="2014" name="G3 (Bethesda)">
        <title>The reference genome sequence of Saccharomyces cerevisiae: Then and now.</title>
        <authorList>
            <person name="Engel S.R."/>
            <person name="Dietrich F.S."/>
            <person name="Fisk D.G."/>
            <person name="Binkley G."/>
            <person name="Balakrishnan R."/>
            <person name="Costanzo M.C."/>
            <person name="Dwight S.S."/>
            <person name="Hitz B.C."/>
            <person name="Karra K."/>
            <person name="Nash R.S."/>
            <person name="Weng S."/>
            <person name="Wong E.D."/>
            <person name="Lloyd P."/>
            <person name="Skrzypek M.S."/>
            <person name="Miyasato S.R."/>
            <person name="Simison M."/>
            <person name="Cherry J.M."/>
        </authorList>
    </citation>
    <scope>GENOME REANNOTATION</scope>
    <source>
        <strain>ATCC 204508 / S288c</strain>
    </source>
</reference>
<reference key="5">
    <citation type="journal article" date="2000" name="J. Bacteriol.">
        <title>Initiation of protein synthesis in Saccharomyces cerevisiae mitochondria without formylation of the initiator tRNA.</title>
        <authorList>
            <person name="Li Y."/>
            <person name="Holmes W.B."/>
            <person name="Appling D.R."/>
            <person name="RajBhandary U.L."/>
        </authorList>
    </citation>
    <scope>FUNCTION</scope>
</reference>
<reference key="6">
    <citation type="journal article" date="2003" name="Biochemistry">
        <title>Mitochondrial methionyl-tRNAfMet formyltransferase from Saccharomyces cerevisiae: gene disruption and tRNA substrate specificity.</title>
        <authorList>
            <person name="Vial L."/>
            <person name="Gomez P."/>
            <person name="Panvert M."/>
            <person name="Schmitt E."/>
            <person name="Blanquet S."/>
            <person name="Mechulam Y."/>
        </authorList>
    </citation>
    <scope>FUNCTION</scope>
    <scope>CATALYTIC ACTIVITY</scope>
    <scope>BIOPHYSICOCHEMICAL PROPERTIES</scope>
    <source>
        <strain>W303</strain>
    </source>
</reference>
<reference key="7">
    <citation type="journal article" date="2003" name="Nature">
        <title>Global analysis of protein localization in budding yeast.</title>
        <authorList>
            <person name="Huh W.-K."/>
            <person name="Falvo J.V."/>
            <person name="Gerke L.C."/>
            <person name="Carroll A.S."/>
            <person name="Howson R.W."/>
            <person name="Weissman J.S."/>
            <person name="O'Shea E.K."/>
        </authorList>
    </citation>
    <scope>SUBCELLULAR LOCATION [LARGE SCALE ANALYSIS]</scope>
</reference>
<reference key="8">
    <citation type="journal article" date="2003" name="Nature">
        <title>Global analysis of protein expression in yeast.</title>
        <authorList>
            <person name="Ghaemmaghami S."/>
            <person name="Huh W.-K."/>
            <person name="Bower K."/>
            <person name="Howson R.W."/>
            <person name="Belle A."/>
            <person name="Dephoure N."/>
            <person name="O'Shea E.K."/>
            <person name="Weissman J.S."/>
        </authorList>
    </citation>
    <scope>LEVEL OF PROTEIN EXPRESSION [LARGE SCALE ANALYSIS]</scope>
</reference>
<reference key="9">
    <citation type="journal article" date="2003" name="Proc. Natl. Acad. Sci. U.S.A.">
        <title>The proteome of Saccharomyces cerevisiae mitochondria.</title>
        <authorList>
            <person name="Sickmann A."/>
            <person name="Reinders J."/>
            <person name="Wagner Y."/>
            <person name="Joppich C."/>
            <person name="Zahedi R.P."/>
            <person name="Meyer H.E."/>
            <person name="Schoenfisch B."/>
            <person name="Perschil I."/>
            <person name="Chacinska A."/>
            <person name="Guiard B."/>
            <person name="Rehling P."/>
            <person name="Pfanner N."/>
            <person name="Meisinger C."/>
        </authorList>
    </citation>
    <scope>SUBCELLULAR LOCATION [LARGE SCALE ANALYSIS]</scope>
    <source>
        <strain>ATCC 76625 / YPH499</strain>
    </source>
</reference>
<reference key="10">
    <citation type="journal article" date="2018" name="Science">
        <title>Formyl-methionine as an N-degron of a eukaryotic N-end rule pathway.</title>
        <authorList>
            <person name="Kim J.M."/>
            <person name="Seok O.H."/>
            <person name="Ju S."/>
            <person name="Heo J.E."/>
            <person name="Yeom J."/>
            <person name="Kim D.S."/>
            <person name="Yoo J.Y."/>
            <person name="Varshavsky A."/>
            <person name="Lee C."/>
            <person name="Hwang C.S."/>
        </authorList>
    </citation>
    <scope>FUNCTION</scope>
    <scope>SUBCELLULAR LOCATION</scope>
    <scope>PHOSPHORYLATION</scope>
</reference>